<feature type="chain" id="PRO_0000159735" description="Involucrin">
    <location>
        <begin position="1"/>
        <end position="384"/>
    </location>
</feature>
<feature type="region of interest" description="Disordered" evidence="2">
    <location>
        <begin position="1"/>
        <end position="384"/>
    </location>
</feature>
<feature type="compositionally biased region" description="Basic and acidic residues" evidence="2">
    <location>
        <begin position="56"/>
        <end position="65"/>
    </location>
</feature>
<feature type="compositionally biased region" description="Basic and acidic residues" evidence="2">
    <location>
        <begin position="80"/>
        <end position="134"/>
    </location>
</feature>
<feature type="compositionally biased region" description="Low complexity" evidence="2">
    <location>
        <begin position="137"/>
        <end position="146"/>
    </location>
</feature>
<feature type="compositionally biased region" description="Basic and acidic residues" evidence="2">
    <location>
        <begin position="179"/>
        <end position="208"/>
    </location>
</feature>
<feature type="compositionally biased region" description="Low complexity" evidence="2">
    <location>
        <begin position="239"/>
        <end position="267"/>
    </location>
</feature>
<feature type="compositionally biased region" description="Basic and acidic residues" evidence="2">
    <location>
        <begin position="268"/>
        <end position="308"/>
    </location>
</feature>
<feature type="compositionally biased region" description="Basic and acidic residues" evidence="2">
    <location>
        <begin position="315"/>
        <end position="336"/>
    </location>
</feature>
<reference key="1">
    <citation type="journal article" date="1990" name="J. Biol. Chem.">
        <title>The involucrin gene of the galago. Existence of a correction process acting on its segment of repeats.</title>
        <authorList>
            <person name="Phillips M."/>
            <person name="Djian P."/>
            <person name="Green H."/>
        </authorList>
    </citation>
    <scope>NUCLEOTIDE SEQUENCE [GENOMIC DNA]</scope>
    <source>
        <tissue>Skin fibroblast</tissue>
    </source>
</reference>
<sequence>MSQQHTLPVTLPPALRQELLGTLSPPAAAQQEQRKQPTPLPTACQKVGSELPGEVPSKHEEKGTDPVKGVLEQECGQQEPELHLGKQQDVHLMKRQDPQEPELHLGKQPEPEGPEPHLGKEQQHQESQDPELHLGKQQQQESQEQELYPGKQQEPQDPELHLGKQQQQESQEQGLCLIKQREPQESQEQRLHLGKEQESQEQRLHLGEEQASQEQRLHLGEEQASQEQRLHLGEEQASPEQRLQLLPQGPQEQELHLGKQQQQQESQQHQEQHEEHQKAEDLGQQHRQEKAQREQQLEEQLDEGKKLLDQQLDQEAVKRHEQLQRDEQFGMKKEQLLEPPGQQKGQLEKPVFVPVPGQVQDIQPAQTAKGEALLLPEQPQEPEV</sequence>
<comment type="function">
    <text>Part of the insoluble cornified cell envelope (CE) of stratified squamous epithelia.</text>
</comment>
<comment type="subunit">
    <text evidence="1">Directly or indirectly cross-linked to cornifelin (CNFN).</text>
</comment>
<comment type="subcellular location">
    <subcellularLocation>
        <location>Cytoplasm</location>
    </subcellularLocation>
    <text>Constituent of the scaffolding of the cornified envelope.</text>
</comment>
<comment type="tissue specificity">
    <text>Keratinocytes of epidermis and other stratified squamous epithelia.</text>
</comment>
<comment type="PTM">
    <text>Substrate of transglutaminase. Specific glutamines or lysines are cross-linked to keratins, desmoplakin and to inter involucrin molecules.</text>
</comment>
<comment type="similarity">
    <text evidence="3">Belongs to the involucrin family.</text>
</comment>
<dbReference type="EMBL" id="J05437">
    <property type="protein sequence ID" value="AAA35450.1"/>
    <property type="molecule type" value="Genomic_DNA"/>
</dbReference>
<dbReference type="PIR" id="A43710">
    <property type="entry name" value="A43710"/>
</dbReference>
<dbReference type="GO" id="GO:0001533">
    <property type="term" value="C:cornified envelope"/>
    <property type="evidence" value="ECO:0007669"/>
    <property type="project" value="InterPro"/>
</dbReference>
<dbReference type="GO" id="GO:0005737">
    <property type="term" value="C:cytoplasm"/>
    <property type="evidence" value="ECO:0007669"/>
    <property type="project" value="UniProtKB-SubCell"/>
</dbReference>
<dbReference type="GO" id="GO:0031424">
    <property type="term" value="P:keratinization"/>
    <property type="evidence" value="ECO:0007669"/>
    <property type="project" value="UniProtKB-KW"/>
</dbReference>
<dbReference type="InterPro" id="IPR009733">
    <property type="entry name" value="Involucrin2"/>
</dbReference>
<dbReference type="InterPro" id="IPR019743">
    <property type="entry name" value="Involucrin_CS"/>
</dbReference>
<dbReference type="InterPro" id="IPR019571">
    <property type="entry name" value="Involucrin_N"/>
</dbReference>
<dbReference type="Pfam" id="PF06994">
    <property type="entry name" value="Involucrin2"/>
    <property type="match status" value="4"/>
</dbReference>
<dbReference type="Pfam" id="PF10583">
    <property type="entry name" value="Involucrin_N"/>
    <property type="match status" value="1"/>
</dbReference>
<dbReference type="PROSITE" id="PS00795">
    <property type="entry name" value="INVOLUCRIN"/>
    <property type="match status" value="1"/>
</dbReference>
<organism>
    <name type="scientific">Otolemur crassicaudatus</name>
    <name type="common">Brown greater galago</name>
    <name type="synonym">Galago crassicaudatus</name>
    <dbReference type="NCBI Taxonomy" id="9463"/>
    <lineage>
        <taxon>Eukaryota</taxon>
        <taxon>Metazoa</taxon>
        <taxon>Chordata</taxon>
        <taxon>Craniata</taxon>
        <taxon>Vertebrata</taxon>
        <taxon>Euteleostomi</taxon>
        <taxon>Mammalia</taxon>
        <taxon>Eutheria</taxon>
        <taxon>Euarchontoglires</taxon>
        <taxon>Primates</taxon>
        <taxon>Strepsirrhini</taxon>
        <taxon>Lorisiformes</taxon>
        <taxon>Galagidae</taxon>
        <taxon>Otolemur</taxon>
    </lineage>
</organism>
<gene>
    <name type="primary">IVL</name>
</gene>
<proteinExistence type="evidence at transcript level"/>
<evidence type="ECO:0000250" key="1"/>
<evidence type="ECO:0000256" key="2">
    <source>
        <dbReference type="SAM" id="MobiDB-lite"/>
    </source>
</evidence>
<evidence type="ECO:0000305" key="3"/>
<protein>
    <recommendedName>
        <fullName>Involucrin</fullName>
    </recommendedName>
</protein>
<keyword id="KW-0963">Cytoplasm</keyword>
<keyword id="KW-0417">Keratinization</keyword>
<keyword id="KW-0677">Repeat</keyword>
<name>INVO_OTOCR</name>
<accession>P24710</accession>